<comment type="function">
    <text evidence="1">Catalyzes the specific phosphorylation of the 3-hydroxyl group of shikimic acid using ATP as a cosubstrate.</text>
</comment>
<comment type="catalytic activity">
    <reaction evidence="1">
        <text>shikimate + ATP = 3-phosphoshikimate + ADP + H(+)</text>
        <dbReference type="Rhea" id="RHEA:13121"/>
        <dbReference type="ChEBI" id="CHEBI:15378"/>
        <dbReference type="ChEBI" id="CHEBI:30616"/>
        <dbReference type="ChEBI" id="CHEBI:36208"/>
        <dbReference type="ChEBI" id="CHEBI:145989"/>
        <dbReference type="ChEBI" id="CHEBI:456216"/>
        <dbReference type="EC" id="2.7.1.71"/>
    </reaction>
</comment>
<comment type="cofactor">
    <cofactor evidence="1">
        <name>Mg(2+)</name>
        <dbReference type="ChEBI" id="CHEBI:18420"/>
    </cofactor>
    <text evidence="1">Binds 1 Mg(2+) ion per subunit.</text>
</comment>
<comment type="pathway">
    <text evidence="1">Metabolic intermediate biosynthesis; chorismate biosynthesis; chorismate from D-erythrose 4-phosphate and phosphoenolpyruvate: step 5/7.</text>
</comment>
<comment type="subunit">
    <text evidence="1">Monomer.</text>
</comment>
<comment type="subcellular location">
    <subcellularLocation>
        <location evidence="1">Cytoplasm</location>
    </subcellularLocation>
</comment>
<comment type="similarity">
    <text evidence="1">Belongs to the shikimate kinase family.</text>
</comment>
<evidence type="ECO:0000255" key="1">
    <source>
        <dbReference type="HAMAP-Rule" id="MF_00109"/>
    </source>
</evidence>
<gene>
    <name evidence="1" type="primary">aroK</name>
    <name type="ordered locus">MGAS9429_Spy1144</name>
</gene>
<organism>
    <name type="scientific">Streptococcus pyogenes serotype M12 (strain MGAS9429)</name>
    <dbReference type="NCBI Taxonomy" id="370551"/>
    <lineage>
        <taxon>Bacteria</taxon>
        <taxon>Bacillati</taxon>
        <taxon>Bacillota</taxon>
        <taxon>Bacilli</taxon>
        <taxon>Lactobacillales</taxon>
        <taxon>Streptococcaceae</taxon>
        <taxon>Streptococcus</taxon>
    </lineage>
</organism>
<keyword id="KW-0028">Amino-acid biosynthesis</keyword>
<keyword id="KW-0057">Aromatic amino acid biosynthesis</keyword>
<keyword id="KW-0067">ATP-binding</keyword>
<keyword id="KW-0963">Cytoplasm</keyword>
<keyword id="KW-0418">Kinase</keyword>
<keyword id="KW-0460">Magnesium</keyword>
<keyword id="KW-0479">Metal-binding</keyword>
<keyword id="KW-0547">Nucleotide-binding</keyword>
<keyword id="KW-0808">Transferase</keyword>
<dbReference type="EC" id="2.7.1.71" evidence="1"/>
<dbReference type="EMBL" id="CP000259">
    <property type="protein sequence ID" value="ABF32331.1"/>
    <property type="molecule type" value="Genomic_DNA"/>
</dbReference>
<dbReference type="RefSeq" id="WP_002989310.1">
    <property type="nucleotide sequence ID" value="NC_008021.1"/>
</dbReference>
<dbReference type="SMR" id="Q1JL88"/>
<dbReference type="KEGG" id="spk:MGAS9429_Spy1144"/>
<dbReference type="HOGENOM" id="CLU_057607_4_3_9"/>
<dbReference type="UniPathway" id="UPA00053">
    <property type="reaction ID" value="UER00088"/>
</dbReference>
<dbReference type="Proteomes" id="UP000002433">
    <property type="component" value="Chromosome"/>
</dbReference>
<dbReference type="GO" id="GO:0005829">
    <property type="term" value="C:cytosol"/>
    <property type="evidence" value="ECO:0007669"/>
    <property type="project" value="TreeGrafter"/>
</dbReference>
<dbReference type="GO" id="GO:0005524">
    <property type="term" value="F:ATP binding"/>
    <property type="evidence" value="ECO:0007669"/>
    <property type="project" value="UniProtKB-UniRule"/>
</dbReference>
<dbReference type="GO" id="GO:0000287">
    <property type="term" value="F:magnesium ion binding"/>
    <property type="evidence" value="ECO:0007669"/>
    <property type="project" value="UniProtKB-UniRule"/>
</dbReference>
<dbReference type="GO" id="GO:0004765">
    <property type="term" value="F:shikimate kinase activity"/>
    <property type="evidence" value="ECO:0007669"/>
    <property type="project" value="UniProtKB-UniRule"/>
</dbReference>
<dbReference type="GO" id="GO:0008652">
    <property type="term" value="P:amino acid biosynthetic process"/>
    <property type="evidence" value="ECO:0007669"/>
    <property type="project" value="UniProtKB-KW"/>
</dbReference>
<dbReference type="GO" id="GO:0009073">
    <property type="term" value="P:aromatic amino acid family biosynthetic process"/>
    <property type="evidence" value="ECO:0007669"/>
    <property type="project" value="UniProtKB-KW"/>
</dbReference>
<dbReference type="GO" id="GO:0009423">
    <property type="term" value="P:chorismate biosynthetic process"/>
    <property type="evidence" value="ECO:0007669"/>
    <property type="project" value="UniProtKB-UniRule"/>
</dbReference>
<dbReference type="CDD" id="cd00464">
    <property type="entry name" value="SK"/>
    <property type="match status" value="1"/>
</dbReference>
<dbReference type="Gene3D" id="3.40.50.300">
    <property type="entry name" value="P-loop containing nucleotide triphosphate hydrolases"/>
    <property type="match status" value="1"/>
</dbReference>
<dbReference type="HAMAP" id="MF_00109">
    <property type="entry name" value="Shikimate_kinase"/>
    <property type="match status" value="1"/>
</dbReference>
<dbReference type="InterPro" id="IPR027417">
    <property type="entry name" value="P-loop_NTPase"/>
</dbReference>
<dbReference type="InterPro" id="IPR031322">
    <property type="entry name" value="Shikimate/glucono_kinase"/>
</dbReference>
<dbReference type="InterPro" id="IPR000623">
    <property type="entry name" value="Shikimate_kinase/TSH1"/>
</dbReference>
<dbReference type="PANTHER" id="PTHR21087">
    <property type="entry name" value="SHIKIMATE KINASE"/>
    <property type="match status" value="1"/>
</dbReference>
<dbReference type="PANTHER" id="PTHR21087:SF16">
    <property type="entry name" value="SHIKIMATE KINASE 1, CHLOROPLASTIC"/>
    <property type="match status" value="1"/>
</dbReference>
<dbReference type="Pfam" id="PF01202">
    <property type="entry name" value="SKI"/>
    <property type="match status" value="1"/>
</dbReference>
<dbReference type="PRINTS" id="PR01100">
    <property type="entry name" value="SHIKIMTKNASE"/>
</dbReference>
<dbReference type="SUPFAM" id="SSF52540">
    <property type="entry name" value="P-loop containing nucleoside triphosphate hydrolases"/>
    <property type="match status" value="1"/>
</dbReference>
<sequence>MTKVLLGFMGVGKTTVSKHLSMHCKDMDAIIEAKIGMSIAAFFEQHGEIAFRTIESQVLKDLLFANDNSVIVTGGGVVVLQENRQLLRKNHQHNILLVASFETLYQRLKHDKKSQRPLFLKYSKEAFYEFYQQRMVFYEGLSDLVIRVDHRTPEEVANIIEGY</sequence>
<accession>Q1JL88</accession>
<protein>
    <recommendedName>
        <fullName evidence="1">Shikimate kinase</fullName>
        <shortName evidence="1">SK</shortName>
        <ecNumber evidence="1">2.7.1.71</ecNumber>
    </recommendedName>
</protein>
<reference key="1">
    <citation type="journal article" date="2006" name="Proc. Natl. Acad. Sci. U.S.A.">
        <title>Molecular genetic anatomy of inter- and intraserotype variation in the human bacterial pathogen group A Streptococcus.</title>
        <authorList>
            <person name="Beres S.B."/>
            <person name="Richter E.W."/>
            <person name="Nagiec M.J."/>
            <person name="Sumby P."/>
            <person name="Porcella S.F."/>
            <person name="DeLeo F.R."/>
            <person name="Musser J.M."/>
        </authorList>
    </citation>
    <scope>NUCLEOTIDE SEQUENCE [LARGE SCALE GENOMIC DNA]</scope>
    <source>
        <strain>MGAS9429</strain>
    </source>
</reference>
<name>AROK_STRPC</name>
<proteinExistence type="inferred from homology"/>
<feature type="chain" id="PRO_1000094420" description="Shikimate kinase">
    <location>
        <begin position="1"/>
        <end position="163"/>
    </location>
</feature>
<feature type="binding site" evidence="1">
    <location>
        <begin position="10"/>
        <end position="15"/>
    </location>
    <ligand>
        <name>ATP</name>
        <dbReference type="ChEBI" id="CHEBI:30616"/>
    </ligand>
</feature>
<feature type="binding site" evidence="1">
    <location>
        <position position="14"/>
    </location>
    <ligand>
        <name>Mg(2+)</name>
        <dbReference type="ChEBI" id="CHEBI:18420"/>
    </ligand>
</feature>
<feature type="binding site" evidence="1">
    <location>
        <position position="28"/>
    </location>
    <ligand>
        <name>substrate</name>
    </ligand>
</feature>
<feature type="binding site" evidence="1">
    <location>
        <position position="52"/>
    </location>
    <ligand>
        <name>substrate</name>
    </ligand>
</feature>
<feature type="binding site" evidence="1">
    <location>
        <position position="75"/>
    </location>
    <ligand>
        <name>substrate</name>
    </ligand>
</feature>
<feature type="binding site" evidence="1">
    <location>
        <position position="116"/>
    </location>
    <ligand>
        <name>ATP</name>
        <dbReference type="ChEBI" id="CHEBI:30616"/>
    </ligand>
</feature>
<feature type="binding site" evidence="1">
    <location>
        <position position="134"/>
    </location>
    <ligand>
        <name>substrate</name>
    </ligand>
</feature>
<feature type="binding site" evidence="1">
    <location>
        <position position="151"/>
    </location>
    <ligand>
        <name>ATP</name>
        <dbReference type="ChEBI" id="CHEBI:30616"/>
    </ligand>
</feature>